<sequence>MHDSEIFKFKDMMMMSCTVQTLVLVPWFLVVFVLAGGEDSSETTAMFPAMFVFGDSLVDNGNNNHLNSLARSNYLPYGIDFAGNQPTGRFSNGKTIVDFIGELLGLPEIPAFMDTVDGGVDILHGVNYASAAGGILEETGRHLGERFSMGRQVENFEKTLMEISRSMRKESVKEYMAKSLVVVSLGNNDYINNYLKPRLFLSSSIYDPTSFADLLLSNFTTHLLELYGKGFRKFVIAGVGPLGCIPDQLAAQAALPGECVEAVNEMAELFNNRLVSLVDRLNSDNKTASEAIFVYGNTYGAAVDILTNPFNYGFEVTDRGCCGVGRNRGEITCLPLAVPCAFRDRHVFWDAFHPTQAFNLIIALRAFNGSKSDCYPINLSQLSRL</sequence>
<organism>
    <name type="scientific">Arabidopsis thaliana</name>
    <name type="common">Mouse-ear cress</name>
    <dbReference type="NCBI Taxonomy" id="3702"/>
    <lineage>
        <taxon>Eukaryota</taxon>
        <taxon>Viridiplantae</taxon>
        <taxon>Streptophyta</taxon>
        <taxon>Embryophyta</taxon>
        <taxon>Tracheophyta</taxon>
        <taxon>Spermatophyta</taxon>
        <taxon>Magnoliopsida</taxon>
        <taxon>eudicotyledons</taxon>
        <taxon>Gunneridae</taxon>
        <taxon>Pentapetalae</taxon>
        <taxon>rosids</taxon>
        <taxon>malvids</taxon>
        <taxon>Brassicales</taxon>
        <taxon>Brassicaceae</taxon>
        <taxon>Camelineae</taxon>
        <taxon>Arabidopsis</taxon>
    </lineage>
</organism>
<comment type="subcellular location">
    <subcellularLocation>
        <location evidence="3">Secreted</location>
    </subcellularLocation>
</comment>
<comment type="similarity">
    <text evidence="3">Belongs to the 'GDSL' lipolytic enzyme family.</text>
</comment>
<name>GDL75_ARATH</name>
<feature type="signal peptide" evidence="2">
    <location>
        <begin position="1"/>
        <end position="35"/>
    </location>
</feature>
<feature type="chain" id="PRO_0000367415" description="GDSL esterase/lipase At5g08460">
    <location>
        <begin position="36"/>
        <end position="385"/>
    </location>
</feature>
<feature type="active site" description="Nucleophile" evidence="1">
    <location>
        <position position="56"/>
    </location>
</feature>
<feature type="active site" evidence="1">
    <location>
        <position position="350"/>
    </location>
</feature>
<feature type="active site" evidence="1">
    <location>
        <position position="353"/>
    </location>
</feature>
<feature type="glycosylation site" description="N-linked (GlcNAc...) asparagine" evidence="2">
    <location>
        <position position="218"/>
    </location>
</feature>
<feature type="glycosylation site" description="N-linked (GlcNAc...) asparagine" evidence="2">
    <location>
        <position position="285"/>
    </location>
</feature>
<feature type="glycosylation site" description="N-linked (GlcNAc...) asparagine" evidence="2">
    <location>
        <position position="368"/>
    </location>
</feature>
<feature type="glycosylation site" description="N-linked (GlcNAc...) asparagine" evidence="2">
    <location>
        <position position="378"/>
    </location>
</feature>
<evidence type="ECO:0000250" key="1"/>
<evidence type="ECO:0000255" key="2"/>
<evidence type="ECO:0000305" key="3"/>
<protein>
    <recommendedName>
        <fullName>GDSL esterase/lipase At5g08460</fullName>
        <ecNumber>3.1.1.-</ecNumber>
    </recommendedName>
    <alternativeName>
        <fullName>Extracellular lipase At5g08460</fullName>
    </alternativeName>
</protein>
<proteinExistence type="evidence at transcript level"/>
<accession>Q9FNP2</accession>
<dbReference type="EC" id="3.1.1.-"/>
<dbReference type="EMBL" id="AB006697">
    <property type="protein sequence ID" value="BAB09995.1"/>
    <property type="molecule type" value="Genomic_DNA"/>
</dbReference>
<dbReference type="EMBL" id="CP002688">
    <property type="protein sequence ID" value="AED91306.1"/>
    <property type="molecule type" value="Genomic_DNA"/>
</dbReference>
<dbReference type="RefSeq" id="NP_196463.1">
    <property type="nucleotide sequence ID" value="NM_120931.2"/>
</dbReference>
<dbReference type="SMR" id="Q9FNP2"/>
<dbReference type="FunCoup" id="Q9FNP2">
    <property type="interactions" value="97"/>
</dbReference>
<dbReference type="STRING" id="3702.Q9FNP2"/>
<dbReference type="GlyGen" id="Q9FNP2">
    <property type="glycosylation" value="4 sites"/>
</dbReference>
<dbReference type="iPTMnet" id="Q9FNP2"/>
<dbReference type="PaxDb" id="3702-AT5G08460.1"/>
<dbReference type="ProteomicsDB" id="247107"/>
<dbReference type="EnsemblPlants" id="AT5G08460.1">
    <property type="protein sequence ID" value="AT5G08460.1"/>
    <property type="gene ID" value="AT5G08460"/>
</dbReference>
<dbReference type="GeneID" id="830745"/>
<dbReference type="Gramene" id="AT5G08460.1">
    <property type="protein sequence ID" value="AT5G08460.1"/>
    <property type="gene ID" value="AT5G08460"/>
</dbReference>
<dbReference type="KEGG" id="ath:AT5G08460"/>
<dbReference type="Araport" id="AT5G08460"/>
<dbReference type="TAIR" id="AT5G08460"/>
<dbReference type="eggNOG" id="ENOG502QSW9">
    <property type="taxonomic scope" value="Eukaryota"/>
</dbReference>
<dbReference type="HOGENOM" id="CLU_015101_0_0_1"/>
<dbReference type="InParanoid" id="Q9FNP2"/>
<dbReference type="OMA" id="EKAYNGP"/>
<dbReference type="PhylomeDB" id="Q9FNP2"/>
<dbReference type="BioCyc" id="ARA:AT5G08460-MONOMER"/>
<dbReference type="PRO" id="PR:Q9FNP2"/>
<dbReference type="Proteomes" id="UP000006548">
    <property type="component" value="Chromosome 5"/>
</dbReference>
<dbReference type="ExpressionAtlas" id="Q9FNP2">
    <property type="expression patterns" value="baseline and differential"/>
</dbReference>
<dbReference type="GO" id="GO:0005576">
    <property type="term" value="C:extracellular region"/>
    <property type="evidence" value="ECO:0007669"/>
    <property type="project" value="UniProtKB-SubCell"/>
</dbReference>
<dbReference type="GO" id="GO:0016788">
    <property type="term" value="F:hydrolase activity, acting on ester bonds"/>
    <property type="evidence" value="ECO:0007669"/>
    <property type="project" value="InterPro"/>
</dbReference>
<dbReference type="GO" id="GO:0016042">
    <property type="term" value="P:lipid catabolic process"/>
    <property type="evidence" value="ECO:0007669"/>
    <property type="project" value="UniProtKB-KW"/>
</dbReference>
<dbReference type="CDD" id="cd01837">
    <property type="entry name" value="SGNH_plant_lipase_like"/>
    <property type="match status" value="1"/>
</dbReference>
<dbReference type="Gene3D" id="3.40.50.1110">
    <property type="entry name" value="SGNH hydrolase"/>
    <property type="match status" value="1"/>
</dbReference>
<dbReference type="InterPro" id="IPR001087">
    <property type="entry name" value="GDSL"/>
</dbReference>
<dbReference type="InterPro" id="IPR051238">
    <property type="entry name" value="GDSL_esterase/lipase"/>
</dbReference>
<dbReference type="InterPro" id="IPR036514">
    <property type="entry name" value="SGNH_hydro_sf"/>
</dbReference>
<dbReference type="InterPro" id="IPR035669">
    <property type="entry name" value="SGNH_plant_lipase-like"/>
</dbReference>
<dbReference type="PANTHER" id="PTHR45650">
    <property type="entry name" value="GDSL-LIKE LIPASE/ACYLHYDROLASE-RELATED"/>
    <property type="match status" value="1"/>
</dbReference>
<dbReference type="PANTHER" id="PTHR45650:SF32">
    <property type="entry name" value="GDSL-LIKE LIPASE_ACYLHYDROLASE"/>
    <property type="match status" value="1"/>
</dbReference>
<dbReference type="Pfam" id="PF00657">
    <property type="entry name" value="Lipase_GDSL"/>
    <property type="match status" value="1"/>
</dbReference>
<gene>
    <name type="ordered locus">At5g08460</name>
    <name type="ORF">F8L15.13</name>
    <name type="ORF">MAH20.2</name>
</gene>
<reference key="1">
    <citation type="journal article" date="1997" name="DNA Res.">
        <title>Structural analysis of Arabidopsis thaliana chromosome 5. II. Sequence features of the regions of 1,044,062 bp covered by thirteen physically assigned P1 clones.</title>
        <authorList>
            <person name="Kotani H."/>
            <person name="Nakamura Y."/>
            <person name="Sato S."/>
            <person name="Kaneko T."/>
            <person name="Asamizu E."/>
            <person name="Miyajima N."/>
            <person name="Tabata S."/>
        </authorList>
    </citation>
    <scope>NUCLEOTIDE SEQUENCE [LARGE SCALE GENOMIC DNA]</scope>
    <source>
        <strain>cv. Columbia</strain>
    </source>
</reference>
<reference key="2">
    <citation type="journal article" date="2017" name="Plant J.">
        <title>Araport11: a complete reannotation of the Arabidopsis thaliana reference genome.</title>
        <authorList>
            <person name="Cheng C.Y."/>
            <person name="Krishnakumar V."/>
            <person name="Chan A.P."/>
            <person name="Thibaud-Nissen F."/>
            <person name="Schobel S."/>
            <person name="Town C.D."/>
        </authorList>
    </citation>
    <scope>GENOME REANNOTATION</scope>
    <source>
        <strain>cv. Columbia</strain>
    </source>
</reference>
<reference key="3">
    <citation type="journal article" date="2004" name="Prog. Lipid Res.">
        <title>GDSL family of serine esterases/lipases.</title>
        <authorList>
            <person name="Akoh C.C."/>
            <person name="Lee G.-C."/>
            <person name="Liaw Y.-C."/>
            <person name="Huang T.-H."/>
            <person name="Shaw J.-F."/>
        </authorList>
    </citation>
    <scope>REVIEW</scope>
</reference>
<reference key="4">
    <citation type="journal article" date="2008" name="Pak. J. Biol. Sci.">
        <title>Sequence analysis of GDSL lipase gene family in Arabidopsis thaliana.</title>
        <authorList>
            <person name="Ling H."/>
        </authorList>
    </citation>
    <scope>GENE FAMILY</scope>
</reference>
<keyword id="KW-0325">Glycoprotein</keyword>
<keyword id="KW-0378">Hydrolase</keyword>
<keyword id="KW-0442">Lipid degradation</keyword>
<keyword id="KW-0443">Lipid metabolism</keyword>
<keyword id="KW-1185">Reference proteome</keyword>
<keyword id="KW-0964">Secreted</keyword>
<keyword id="KW-0732">Signal</keyword>